<proteinExistence type="inferred from homology"/>
<protein>
    <recommendedName>
        <fullName evidence="1">Holliday junction branch migration complex subunit RuvB</fullName>
        <ecNumber evidence="1">3.6.4.-</ecNumber>
    </recommendedName>
</protein>
<gene>
    <name evidence="1" type="primary">ruvB</name>
    <name type="ordered locus">Nmul_A2719</name>
</gene>
<evidence type="ECO:0000255" key="1">
    <source>
        <dbReference type="HAMAP-Rule" id="MF_00016"/>
    </source>
</evidence>
<accession>Q2Y5G5</accession>
<organism>
    <name type="scientific">Nitrosospira multiformis (strain ATCC 25196 / NCIMB 11849 / C 71)</name>
    <dbReference type="NCBI Taxonomy" id="323848"/>
    <lineage>
        <taxon>Bacteria</taxon>
        <taxon>Pseudomonadati</taxon>
        <taxon>Pseudomonadota</taxon>
        <taxon>Betaproteobacteria</taxon>
        <taxon>Nitrosomonadales</taxon>
        <taxon>Nitrosomonadaceae</taxon>
        <taxon>Nitrosospira</taxon>
    </lineage>
</organism>
<feature type="chain" id="PRO_0000235384" description="Holliday junction branch migration complex subunit RuvB">
    <location>
        <begin position="1"/>
        <end position="347"/>
    </location>
</feature>
<feature type="region of interest" description="Large ATPase domain (RuvB-L)" evidence="1">
    <location>
        <begin position="4"/>
        <end position="185"/>
    </location>
</feature>
<feature type="region of interest" description="Small ATPAse domain (RuvB-S)" evidence="1">
    <location>
        <begin position="186"/>
        <end position="256"/>
    </location>
</feature>
<feature type="region of interest" description="Head domain (RuvB-H)" evidence="1">
    <location>
        <begin position="259"/>
        <end position="347"/>
    </location>
</feature>
<feature type="binding site" evidence="1">
    <location>
        <position position="24"/>
    </location>
    <ligand>
        <name>ATP</name>
        <dbReference type="ChEBI" id="CHEBI:30616"/>
    </ligand>
</feature>
<feature type="binding site" evidence="1">
    <location>
        <position position="25"/>
    </location>
    <ligand>
        <name>ATP</name>
        <dbReference type="ChEBI" id="CHEBI:30616"/>
    </ligand>
</feature>
<feature type="binding site" evidence="1">
    <location>
        <position position="66"/>
    </location>
    <ligand>
        <name>ATP</name>
        <dbReference type="ChEBI" id="CHEBI:30616"/>
    </ligand>
</feature>
<feature type="binding site" evidence="1">
    <location>
        <position position="69"/>
    </location>
    <ligand>
        <name>ATP</name>
        <dbReference type="ChEBI" id="CHEBI:30616"/>
    </ligand>
</feature>
<feature type="binding site" evidence="1">
    <location>
        <position position="70"/>
    </location>
    <ligand>
        <name>ATP</name>
        <dbReference type="ChEBI" id="CHEBI:30616"/>
    </ligand>
</feature>
<feature type="binding site" evidence="1">
    <location>
        <position position="70"/>
    </location>
    <ligand>
        <name>Mg(2+)</name>
        <dbReference type="ChEBI" id="CHEBI:18420"/>
    </ligand>
</feature>
<feature type="binding site" evidence="1">
    <location>
        <position position="71"/>
    </location>
    <ligand>
        <name>ATP</name>
        <dbReference type="ChEBI" id="CHEBI:30616"/>
    </ligand>
</feature>
<feature type="binding site" evidence="1">
    <location>
        <begin position="132"/>
        <end position="134"/>
    </location>
    <ligand>
        <name>ATP</name>
        <dbReference type="ChEBI" id="CHEBI:30616"/>
    </ligand>
</feature>
<feature type="binding site" evidence="1">
    <location>
        <position position="175"/>
    </location>
    <ligand>
        <name>ATP</name>
        <dbReference type="ChEBI" id="CHEBI:30616"/>
    </ligand>
</feature>
<feature type="binding site" evidence="1">
    <location>
        <position position="185"/>
    </location>
    <ligand>
        <name>ATP</name>
        <dbReference type="ChEBI" id="CHEBI:30616"/>
    </ligand>
</feature>
<feature type="binding site" evidence="1">
    <location>
        <position position="222"/>
    </location>
    <ligand>
        <name>ATP</name>
        <dbReference type="ChEBI" id="CHEBI:30616"/>
    </ligand>
</feature>
<feature type="binding site" evidence="1">
    <location>
        <position position="295"/>
    </location>
    <ligand>
        <name>DNA</name>
        <dbReference type="ChEBI" id="CHEBI:16991"/>
    </ligand>
</feature>
<feature type="binding site" evidence="1">
    <location>
        <position position="314"/>
    </location>
    <ligand>
        <name>DNA</name>
        <dbReference type="ChEBI" id="CHEBI:16991"/>
    </ligand>
</feature>
<feature type="binding site" evidence="1">
    <location>
        <position position="319"/>
    </location>
    <ligand>
        <name>DNA</name>
        <dbReference type="ChEBI" id="CHEBI:16991"/>
    </ligand>
</feature>
<name>RUVB_NITMU</name>
<reference key="1">
    <citation type="submission" date="2005-08" db="EMBL/GenBank/DDBJ databases">
        <title>Complete sequence of chromosome 1 of Nitrosospira multiformis ATCC 25196.</title>
        <authorList>
            <person name="Copeland A."/>
            <person name="Lucas S."/>
            <person name="Lapidus A."/>
            <person name="Barry K."/>
            <person name="Detter J.C."/>
            <person name="Glavina T."/>
            <person name="Hammon N."/>
            <person name="Israni S."/>
            <person name="Pitluck S."/>
            <person name="Chain P."/>
            <person name="Malfatti S."/>
            <person name="Shin M."/>
            <person name="Vergez L."/>
            <person name="Schmutz J."/>
            <person name="Larimer F."/>
            <person name="Land M."/>
            <person name="Hauser L."/>
            <person name="Kyrpides N."/>
            <person name="Lykidis A."/>
            <person name="Richardson P."/>
        </authorList>
    </citation>
    <scope>NUCLEOTIDE SEQUENCE [LARGE SCALE GENOMIC DNA]</scope>
    <source>
        <strain>ATCC 25196 / NCIMB 11849 / C 71</strain>
    </source>
</reference>
<sequence length="347" mass="38452">MIETDRLITPAPLSLKEEDLERALRPKHLAEYIGQEKIRGQLQIFIEAARRRREALDHVLLFGPPGLGKTTLAHIVAKEMGVGLRQTSGPVLERPGDLAALLTNLEPNDVLFIDEIHRLSPVVEEILYPALEDYQLDIMIGEGPAARSVKLDLPPFTLVGATTRAGMLTNPLRDRFGIISRLEFYSVEELTQIVMRSAALLGADISPDGATEIARRSRGTPRVVNRLLRRVRDFAEVKAEGRINRQVADAALLMLDVDAIGLDVMDRKLLLTVMEKFGGGPVGVDNLAAAISEERGTIEDVLEPYLIQQGYMKRTPRGRMATSIAYQHFGLALPRNGLSADLWDEKQ</sequence>
<dbReference type="EC" id="3.6.4.-" evidence="1"/>
<dbReference type="EMBL" id="CP000103">
    <property type="protein sequence ID" value="ABB76006.1"/>
    <property type="molecule type" value="Genomic_DNA"/>
</dbReference>
<dbReference type="RefSeq" id="WP_011381998.1">
    <property type="nucleotide sequence ID" value="NC_007614.1"/>
</dbReference>
<dbReference type="SMR" id="Q2Y5G5"/>
<dbReference type="STRING" id="323848.Nmul_A2719"/>
<dbReference type="KEGG" id="nmu:Nmul_A2719"/>
<dbReference type="eggNOG" id="COG2255">
    <property type="taxonomic scope" value="Bacteria"/>
</dbReference>
<dbReference type="HOGENOM" id="CLU_055599_1_0_4"/>
<dbReference type="OrthoDB" id="9804478at2"/>
<dbReference type="Proteomes" id="UP000002718">
    <property type="component" value="Chromosome"/>
</dbReference>
<dbReference type="GO" id="GO:0005737">
    <property type="term" value="C:cytoplasm"/>
    <property type="evidence" value="ECO:0007669"/>
    <property type="project" value="UniProtKB-SubCell"/>
</dbReference>
<dbReference type="GO" id="GO:0048476">
    <property type="term" value="C:Holliday junction resolvase complex"/>
    <property type="evidence" value="ECO:0007669"/>
    <property type="project" value="UniProtKB-UniRule"/>
</dbReference>
<dbReference type="GO" id="GO:0005524">
    <property type="term" value="F:ATP binding"/>
    <property type="evidence" value="ECO:0007669"/>
    <property type="project" value="UniProtKB-UniRule"/>
</dbReference>
<dbReference type="GO" id="GO:0016887">
    <property type="term" value="F:ATP hydrolysis activity"/>
    <property type="evidence" value="ECO:0007669"/>
    <property type="project" value="InterPro"/>
</dbReference>
<dbReference type="GO" id="GO:0000400">
    <property type="term" value="F:four-way junction DNA binding"/>
    <property type="evidence" value="ECO:0007669"/>
    <property type="project" value="UniProtKB-UniRule"/>
</dbReference>
<dbReference type="GO" id="GO:0009378">
    <property type="term" value="F:four-way junction helicase activity"/>
    <property type="evidence" value="ECO:0007669"/>
    <property type="project" value="InterPro"/>
</dbReference>
<dbReference type="GO" id="GO:0006310">
    <property type="term" value="P:DNA recombination"/>
    <property type="evidence" value="ECO:0007669"/>
    <property type="project" value="UniProtKB-UniRule"/>
</dbReference>
<dbReference type="GO" id="GO:0006281">
    <property type="term" value="P:DNA repair"/>
    <property type="evidence" value="ECO:0007669"/>
    <property type="project" value="UniProtKB-UniRule"/>
</dbReference>
<dbReference type="CDD" id="cd00009">
    <property type="entry name" value="AAA"/>
    <property type="match status" value="1"/>
</dbReference>
<dbReference type="FunFam" id="1.10.10.10:FF:000086">
    <property type="entry name" value="Holliday junction ATP-dependent DNA helicase RuvB"/>
    <property type="match status" value="1"/>
</dbReference>
<dbReference type="FunFam" id="1.10.8.60:FF:000023">
    <property type="entry name" value="Holliday junction ATP-dependent DNA helicase RuvB"/>
    <property type="match status" value="1"/>
</dbReference>
<dbReference type="FunFam" id="3.40.50.300:FF:000073">
    <property type="entry name" value="Holliday junction ATP-dependent DNA helicase RuvB"/>
    <property type="match status" value="1"/>
</dbReference>
<dbReference type="Gene3D" id="1.10.8.60">
    <property type="match status" value="1"/>
</dbReference>
<dbReference type="Gene3D" id="3.40.50.300">
    <property type="entry name" value="P-loop containing nucleotide triphosphate hydrolases"/>
    <property type="match status" value="1"/>
</dbReference>
<dbReference type="Gene3D" id="1.10.10.10">
    <property type="entry name" value="Winged helix-like DNA-binding domain superfamily/Winged helix DNA-binding domain"/>
    <property type="match status" value="1"/>
</dbReference>
<dbReference type="HAMAP" id="MF_00016">
    <property type="entry name" value="DNA_HJ_migration_RuvB"/>
    <property type="match status" value="1"/>
</dbReference>
<dbReference type="InterPro" id="IPR003593">
    <property type="entry name" value="AAA+_ATPase"/>
</dbReference>
<dbReference type="InterPro" id="IPR041445">
    <property type="entry name" value="AAA_lid_4"/>
</dbReference>
<dbReference type="InterPro" id="IPR004605">
    <property type="entry name" value="DNA_helicase_Holl-junc_RuvB"/>
</dbReference>
<dbReference type="InterPro" id="IPR027417">
    <property type="entry name" value="P-loop_NTPase"/>
</dbReference>
<dbReference type="InterPro" id="IPR008824">
    <property type="entry name" value="RuvB-like_N"/>
</dbReference>
<dbReference type="InterPro" id="IPR008823">
    <property type="entry name" value="RuvB_C"/>
</dbReference>
<dbReference type="InterPro" id="IPR036388">
    <property type="entry name" value="WH-like_DNA-bd_sf"/>
</dbReference>
<dbReference type="InterPro" id="IPR036390">
    <property type="entry name" value="WH_DNA-bd_sf"/>
</dbReference>
<dbReference type="NCBIfam" id="NF000868">
    <property type="entry name" value="PRK00080.1"/>
    <property type="match status" value="1"/>
</dbReference>
<dbReference type="NCBIfam" id="TIGR00635">
    <property type="entry name" value="ruvB"/>
    <property type="match status" value="1"/>
</dbReference>
<dbReference type="PANTHER" id="PTHR42848">
    <property type="match status" value="1"/>
</dbReference>
<dbReference type="PANTHER" id="PTHR42848:SF1">
    <property type="entry name" value="HOLLIDAY JUNCTION BRANCH MIGRATION COMPLEX SUBUNIT RUVB"/>
    <property type="match status" value="1"/>
</dbReference>
<dbReference type="Pfam" id="PF17864">
    <property type="entry name" value="AAA_lid_4"/>
    <property type="match status" value="1"/>
</dbReference>
<dbReference type="Pfam" id="PF05491">
    <property type="entry name" value="RuvB_C"/>
    <property type="match status" value="1"/>
</dbReference>
<dbReference type="Pfam" id="PF05496">
    <property type="entry name" value="RuvB_N"/>
    <property type="match status" value="1"/>
</dbReference>
<dbReference type="SMART" id="SM00382">
    <property type="entry name" value="AAA"/>
    <property type="match status" value="1"/>
</dbReference>
<dbReference type="SUPFAM" id="SSF52540">
    <property type="entry name" value="P-loop containing nucleoside triphosphate hydrolases"/>
    <property type="match status" value="1"/>
</dbReference>
<dbReference type="SUPFAM" id="SSF46785">
    <property type="entry name" value="Winged helix' DNA-binding domain"/>
    <property type="match status" value="1"/>
</dbReference>
<comment type="function">
    <text evidence="1">The RuvA-RuvB-RuvC complex processes Holliday junction (HJ) DNA during genetic recombination and DNA repair, while the RuvA-RuvB complex plays an important role in the rescue of blocked DNA replication forks via replication fork reversal (RFR). RuvA specifically binds to HJ cruciform DNA, conferring on it an open structure. The RuvB hexamer acts as an ATP-dependent pump, pulling dsDNA into and through the RuvAB complex. RuvB forms 2 homohexamers on either side of HJ DNA bound by 1 or 2 RuvA tetramers; 4 subunits per hexamer contact DNA at a time. Coordinated motions by a converter formed by DNA-disengaged RuvB subunits stimulates ATP hydrolysis and nucleotide exchange. Immobilization of the converter enables RuvB to convert the ATP-contained energy into a lever motion, pulling 2 nucleotides of DNA out of the RuvA tetramer per ATP hydrolyzed, thus driving DNA branch migration. The RuvB motors rotate together with the DNA substrate, which together with the progressing nucleotide cycle form the mechanistic basis for DNA recombination by continuous HJ branch migration. Branch migration allows RuvC to scan DNA until it finds its consensus sequence, where it cleaves and resolves cruciform DNA.</text>
</comment>
<comment type="catalytic activity">
    <reaction evidence="1">
        <text>ATP + H2O = ADP + phosphate + H(+)</text>
        <dbReference type="Rhea" id="RHEA:13065"/>
        <dbReference type="ChEBI" id="CHEBI:15377"/>
        <dbReference type="ChEBI" id="CHEBI:15378"/>
        <dbReference type="ChEBI" id="CHEBI:30616"/>
        <dbReference type="ChEBI" id="CHEBI:43474"/>
        <dbReference type="ChEBI" id="CHEBI:456216"/>
    </reaction>
</comment>
<comment type="subunit">
    <text evidence="1">Homohexamer. Forms an RuvA(8)-RuvB(12)-Holliday junction (HJ) complex. HJ DNA is sandwiched between 2 RuvA tetramers; dsDNA enters through RuvA and exits via RuvB. An RuvB hexamer assembles on each DNA strand where it exits the tetramer. Each RuvB hexamer is contacted by two RuvA subunits (via domain III) on 2 adjacent RuvB subunits; this complex drives branch migration. In the full resolvosome a probable DNA-RuvA(4)-RuvB(12)-RuvC(2) complex forms which resolves the HJ.</text>
</comment>
<comment type="subcellular location">
    <subcellularLocation>
        <location evidence="1">Cytoplasm</location>
    </subcellularLocation>
</comment>
<comment type="domain">
    <text evidence="1">Has 3 domains, the large (RuvB-L) and small ATPase (RuvB-S) domains and the C-terminal head (RuvB-H) domain. The head domain binds DNA, while the ATPase domains jointly bind ATP, ADP or are empty depending on the state of the subunit in the translocation cycle. During a single DNA translocation step the structure of each domain remains the same, but their relative positions change.</text>
</comment>
<comment type="similarity">
    <text evidence="1">Belongs to the RuvB family.</text>
</comment>
<keyword id="KW-0067">ATP-binding</keyword>
<keyword id="KW-0963">Cytoplasm</keyword>
<keyword id="KW-0227">DNA damage</keyword>
<keyword id="KW-0233">DNA recombination</keyword>
<keyword id="KW-0234">DNA repair</keyword>
<keyword id="KW-0238">DNA-binding</keyword>
<keyword id="KW-0378">Hydrolase</keyword>
<keyword id="KW-0547">Nucleotide-binding</keyword>
<keyword id="KW-1185">Reference proteome</keyword>